<feature type="initiator methionine" description="Removed" evidence="2">
    <location>
        <position position="1"/>
    </location>
</feature>
<feature type="chain" id="PRO_0000207440" description="ADP-ribosylation factor-like protein 2">
    <location>
        <begin position="2"/>
        <end position="184"/>
    </location>
</feature>
<feature type="binding site" evidence="1">
    <location>
        <begin position="23"/>
        <end position="30"/>
    </location>
    <ligand>
        <name>GTP</name>
        <dbReference type="ChEBI" id="CHEBI:37565"/>
    </ligand>
</feature>
<feature type="binding site" evidence="1">
    <location>
        <begin position="66"/>
        <end position="70"/>
    </location>
    <ligand>
        <name>GTP</name>
        <dbReference type="ChEBI" id="CHEBI:37565"/>
    </ligand>
</feature>
<feature type="binding site" evidence="1">
    <location>
        <position position="68"/>
    </location>
    <ligand>
        <name>GTP</name>
        <dbReference type="ChEBI" id="CHEBI:37565"/>
    </ligand>
</feature>
<feature type="binding site" evidence="1">
    <location>
        <begin position="125"/>
        <end position="128"/>
    </location>
    <ligand>
        <name>GTP</name>
        <dbReference type="ChEBI" id="CHEBI:37565"/>
    </ligand>
</feature>
<feature type="lipid moiety-binding region" description="N-myristoyl glycine" evidence="2">
    <location>
        <position position="2"/>
    </location>
</feature>
<name>ARL2_CAEEL</name>
<sequence length="184" mass="20999">MGFLKILRKQRAREREMRILILGLDNAGKTTLMKKFLDEPTDTIEPTLGFDIKTVHFKDFQLNLWDVGGQKSLRSYWKNYFESTDALIWVVDSSDRERLLQCSEELKKLLGEERLAGASLLVLANKSDLPGAIDVNSIAQVLDLHSIKSHHWKIFSCCALSGDRLVQAMTWLCDDVGSRLFILD</sequence>
<gene>
    <name type="primary">evl-20</name>
    <name type="synonym">arl-2</name>
    <name type="ORF">F22B5.1</name>
</gene>
<organism>
    <name type="scientific">Caenorhabditis elegans</name>
    <dbReference type="NCBI Taxonomy" id="6239"/>
    <lineage>
        <taxon>Eukaryota</taxon>
        <taxon>Metazoa</taxon>
        <taxon>Ecdysozoa</taxon>
        <taxon>Nematoda</taxon>
        <taxon>Chromadorea</taxon>
        <taxon>Rhabditida</taxon>
        <taxon>Rhabditina</taxon>
        <taxon>Rhabditomorpha</taxon>
        <taxon>Rhabditoidea</taxon>
        <taxon>Rhabditidae</taxon>
        <taxon>Peloderinae</taxon>
        <taxon>Caenorhabditis</taxon>
    </lineage>
</organism>
<proteinExistence type="evidence at transcript level"/>
<dbReference type="EMBL" id="Z50044">
    <property type="protein sequence ID" value="CAA90353.2"/>
    <property type="molecule type" value="Genomic_DNA"/>
</dbReference>
<dbReference type="PIR" id="T21237">
    <property type="entry name" value="T21237"/>
</dbReference>
<dbReference type="RefSeq" id="NP_495779.1">
    <property type="nucleotide sequence ID" value="NM_063378.4"/>
</dbReference>
<dbReference type="SMR" id="Q19705"/>
<dbReference type="FunCoup" id="Q19705">
    <property type="interactions" value="2121"/>
</dbReference>
<dbReference type="STRING" id="6239.F22B5.1.1"/>
<dbReference type="PaxDb" id="6239-F22B5.1"/>
<dbReference type="PeptideAtlas" id="Q19705"/>
<dbReference type="EnsemblMetazoa" id="F22B5.1.1">
    <property type="protein sequence ID" value="F22B5.1.1"/>
    <property type="gene ID" value="WBGene00001358"/>
</dbReference>
<dbReference type="GeneID" id="191632"/>
<dbReference type="KEGG" id="cel:CELE_F22B5.1"/>
<dbReference type="UCSC" id="F22B5.1">
    <property type="organism name" value="c. elegans"/>
</dbReference>
<dbReference type="AGR" id="WB:WBGene00001358"/>
<dbReference type="CTD" id="191632"/>
<dbReference type="WormBase" id="F22B5.1">
    <property type="protein sequence ID" value="CE27425"/>
    <property type="gene ID" value="WBGene00001358"/>
    <property type="gene designation" value="evl-20"/>
</dbReference>
<dbReference type="eggNOG" id="KOG0073">
    <property type="taxonomic scope" value="Eukaryota"/>
</dbReference>
<dbReference type="GeneTree" id="ENSGT00940000157941"/>
<dbReference type="HOGENOM" id="CLU_040729_12_3_1"/>
<dbReference type="InParanoid" id="Q19705"/>
<dbReference type="OMA" id="KTHHWQI"/>
<dbReference type="OrthoDB" id="2011769at2759"/>
<dbReference type="PhylomeDB" id="Q19705"/>
<dbReference type="Reactome" id="R-CEL-9648002">
    <property type="pathway name" value="RAS processing"/>
</dbReference>
<dbReference type="PRO" id="PR:Q19705"/>
<dbReference type="Proteomes" id="UP000001940">
    <property type="component" value="Chromosome II"/>
</dbReference>
<dbReference type="Bgee" id="WBGene00001358">
    <property type="expression patterns" value="Expressed in germ line (C elegans) and 4 other cell types or tissues"/>
</dbReference>
<dbReference type="GO" id="GO:0005818">
    <property type="term" value="C:aster"/>
    <property type="evidence" value="ECO:0000314"/>
    <property type="project" value="WormBase"/>
</dbReference>
<dbReference type="GO" id="GO:0005813">
    <property type="term" value="C:centrosome"/>
    <property type="evidence" value="ECO:0000314"/>
    <property type="project" value="UniProtKB"/>
</dbReference>
<dbReference type="GO" id="GO:0005737">
    <property type="term" value="C:cytoplasm"/>
    <property type="evidence" value="ECO:0000314"/>
    <property type="project" value="WormBase"/>
</dbReference>
<dbReference type="GO" id="GO:0015630">
    <property type="term" value="C:microtubule cytoskeleton"/>
    <property type="evidence" value="ECO:0000318"/>
    <property type="project" value="GO_Central"/>
</dbReference>
<dbReference type="GO" id="GO:0005886">
    <property type="term" value="C:plasma membrane"/>
    <property type="evidence" value="ECO:0000314"/>
    <property type="project" value="UniProtKB"/>
</dbReference>
<dbReference type="GO" id="GO:0005525">
    <property type="term" value="F:GTP binding"/>
    <property type="evidence" value="ECO:0000318"/>
    <property type="project" value="GO_Central"/>
</dbReference>
<dbReference type="GO" id="GO:0003924">
    <property type="term" value="F:GTPase activity"/>
    <property type="evidence" value="ECO:0000304"/>
    <property type="project" value="UniProtKB"/>
</dbReference>
<dbReference type="GO" id="GO:0043622">
    <property type="term" value="P:cortical microtubule organization"/>
    <property type="evidence" value="ECO:0000315"/>
    <property type="project" value="UniProtKB"/>
</dbReference>
<dbReference type="GO" id="GO:0009792">
    <property type="term" value="P:embryo development ending in birth or egg hatching"/>
    <property type="evidence" value="ECO:0000315"/>
    <property type="project" value="UniProtKB"/>
</dbReference>
<dbReference type="GO" id="GO:0030540">
    <property type="term" value="P:female genitalia development"/>
    <property type="evidence" value="ECO:0000315"/>
    <property type="project" value="UniProtKB"/>
</dbReference>
<dbReference type="GO" id="GO:0000281">
    <property type="term" value="P:mitotic cytokinesis"/>
    <property type="evidence" value="ECO:0000315"/>
    <property type="project" value="WormBase"/>
</dbReference>
<dbReference type="GO" id="GO:0006457">
    <property type="term" value="P:protein folding"/>
    <property type="evidence" value="ECO:0000318"/>
    <property type="project" value="GO_Central"/>
</dbReference>
<dbReference type="CDD" id="cd04154">
    <property type="entry name" value="Arl2"/>
    <property type="match status" value="1"/>
</dbReference>
<dbReference type="FunFam" id="3.40.50.300:FF:000981">
    <property type="entry name" value="ADP-ribosylation factor-like 2"/>
    <property type="match status" value="1"/>
</dbReference>
<dbReference type="Gene3D" id="3.40.50.300">
    <property type="entry name" value="P-loop containing nucleotide triphosphate hydrolases"/>
    <property type="match status" value="1"/>
</dbReference>
<dbReference type="InterPro" id="IPR045873">
    <property type="entry name" value="Arl2"/>
</dbReference>
<dbReference type="InterPro" id="IPR044612">
    <property type="entry name" value="ARL2/3"/>
</dbReference>
<dbReference type="InterPro" id="IPR027417">
    <property type="entry name" value="P-loop_NTPase"/>
</dbReference>
<dbReference type="InterPro" id="IPR005225">
    <property type="entry name" value="Small_GTP-bd"/>
</dbReference>
<dbReference type="InterPro" id="IPR006689">
    <property type="entry name" value="Small_GTPase_ARF/SAR"/>
</dbReference>
<dbReference type="NCBIfam" id="TIGR00231">
    <property type="entry name" value="small_GTP"/>
    <property type="match status" value="1"/>
</dbReference>
<dbReference type="PANTHER" id="PTHR45697">
    <property type="entry name" value="ADP-RIBOSYLATION FACTOR-LIKE PROTEIN 2-RELATED"/>
    <property type="match status" value="1"/>
</dbReference>
<dbReference type="Pfam" id="PF00025">
    <property type="entry name" value="Arf"/>
    <property type="match status" value="1"/>
</dbReference>
<dbReference type="PRINTS" id="PR00328">
    <property type="entry name" value="SAR1GTPBP"/>
</dbReference>
<dbReference type="SMART" id="SM00177">
    <property type="entry name" value="ARF"/>
    <property type="match status" value="1"/>
</dbReference>
<dbReference type="SMART" id="SM00175">
    <property type="entry name" value="RAB"/>
    <property type="match status" value="1"/>
</dbReference>
<dbReference type="SMART" id="SM00178">
    <property type="entry name" value="SAR"/>
    <property type="match status" value="1"/>
</dbReference>
<dbReference type="SUPFAM" id="SSF52540">
    <property type="entry name" value="P-loop containing nucleoside triphosphate hydrolases"/>
    <property type="match status" value="1"/>
</dbReference>
<dbReference type="PROSITE" id="PS51417">
    <property type="entry name" value="ARF"/>
    <property type="match status" value="1"/>
</dbReference>
<comment type="function">
    <text evidence="3 4">GTP-binding protein that functions in embryogenesis, cytokinesis, germline development and microtubulule cytoskeleton dynamics.</text>
</comment>
<comment type="subcellular location">
    <subcellularLocation>
        <location evidence="3">Cytoplasm</location>
    </subcellularLocation>
    <subcellularLocation>
        <location evidence="3">Cell membrane</location>
    </subcellularLocation>
    <subcellularLocation>
        <location evidence="3">Cytoplasm</location>
        <location evidence="3">Cytoskeleton</location>
        <location evidence="3">Microtubule organizing center</location>
        <location evidence="3">Centrosome</location>
    </subcellularLocation>
    <text>Some diffuse cytoplasmic expression is detected but expression is concentrated mainly next to centrosomes and is excluded from the mitotic spindle area. Localizes to the cortical plasma membrane of embryonic blastomeres.</text>
</comment>
<comment type="tissue specificity">
    <text evidence="3">In the embryo, strongly expressed in migrating hypodermal cells. Shortly before the beginning of elongation, expressed in many developing neurons where it persists throughout adulthood. In the larva, highly expressed in migrating hypodermal cells and the uterus. Also expressed in vulva, spermatheca, sheath cells, distal tips cells and proctoderm of the male tail.</text>
</comment>
<comment type="developmental stage">
    <text evidence="3">Expression is first detected during embryogenesis at the beginning of morphogenesis and continues in a subset of larval tissues and in adult neurons.</text>
</comment>
<comment type="disruption phenotype">
    <text evidence="3">Worms exhibit abnormal vulva, gonad and male tail development and disruption in embryonic proliferation. Subcellular defects include a lack of microtubule cytoskeleton and excessive chromosomes in oocyte nuclei. Many embryos show a lethal phenotype arrested at the bean stage just prior to the beginning of morphogenesis.</text>
</comment>
<comment type="similarity">
    <text evidence="5">Belongs to the small GTPase superfamily. Arf family.</text>
</comment>
<reference key="1">
    <citation type="journal article" date="2002" name="Dev. Cell">
        <title>The C. elegans evl-20 gene is a homolog of the small GTPase ARL2 and regulates cytoskeleton dynamics during cytokinesis and morphogenesis.</title>
        <authorList>
            <person name="Antoshechkin I."/>
            <person name="Han M."/>
        </authorList>
    </citation>
    <scope>NUCLEOTIDE SEQUENCE [MRNA]</scope>
    <scope>FUNCTION</scope>
    <scope>SUBCELLULAR LOCATION</scope>
    <scope>TISSUE SPECIFICITY</scope>
    <scope>DEVELOPMENTAL STAGE</scope>
    <scope>DISRUPTION PHENOTYPE</scope>
</reference>
<reference key="2">
    <citation type="journal article" date="1998" name="Science">
        <title>Genome sequence of the nematode C. elegans: a platform for investigating biology.</title>
        <authorList>
            <consortium name="The C. elegans sequencing consortium"/>
        </authorList>
    </citation>
    <scope>NUCLEOTIDE SEQUENCE [LARGE SCALE GENOMIC DNA]</scope>
    <source>
        <strain>Bristol N2</strain>
    </source>
</reference>
<reference key="3">
    <citation type="journal article" date="2004" name="FASEB J.">
        <title>Functional genomic analysis of the ADP-ribosylation factor family of GTPases: phylogeny among diverse eukaryotes and function in C. elegans.</title>
        <authorList>
            <person name="Li Y."/>
            <person name="Kelly W.G."/>
            <person name="Logsdon J.M. Jr."/>
            <person name="Schurko A.M."/>
            <person name="Harfe B.D."/>
            <person name="Hill-Harfe K.L."/>
            <person name="Kahn R.A."/>
        </authorList>
    </citation>
    <scope>FUNCTION</scope>
</reference>
<evidence type="ECO:0000250" key="1"/>
<evidence type="ECO:0000255" key="2"/>
<evidence type="ECO:0000269" key="3">
    <source>
    </source>
</evidence>
<evidence type="ECO:0000269" key="4">
    <source>
    </source>
</evidence>
<evidence type="ECO:0000305" key="5"/>
<protein>
    <recommendedName>
        <fullName>ADP-ribosylation factor-like protein 2</fullName>
    </recommendedName>
    <alternativeName>
        <fullName>Abnormal eversion of vulva protein 20</fullName>
    </alternativeName>
</protein>
<keyword id="KW-0131">Cell cycle</keyword>
<keyword id="KW-0132">Cell division</keyword>
<keyword id="KW-1003">Cell membrane</keyword>
<keyword id="KW-0963">Cytoplasm</keyword>
<keyword id="KW-0206">Cytoskeleton</keyword>
<keyword id="KW-0217">Developmental protein</keyword>
<keyword id="KW-0342">GTP-binding</keyword>
<keyword id="KW-0449">Lipoprotein</keyword>
<keyword id="KW-0472">Membrane</keyword>
<keyword id="KW-0519">Myristate</keyword>
<keyword id="KW-0547">Nucleotide-binding</keyword>
<keyword id="KW-1185">Reference proteome</keyword>
<accession>Q19705</accession>